<protein>
    <recommendedName>
        <fullName evidence="1">Glycosylated lysosomal membrane protein</fullName>
    </recommendedName>
    <alternativeName>
        <fullName evidence="1">Lysosomal protein NCU-G1</fullName>
    </alternativeName>
</protein>
<name>GLMP_SALSA</name>
<proteinExistence type="evidence at transcript level"/>
<gene>
    <name type="primary">glmp</name>
</gene>
<keyword id="KW-0325">Glycoprotein</keyword>
<keyword id="KW-0458">Lysosome</keyword>
<keyword id="KW-0472">Membrane</keyword>
<keyword id="KW-1185">Reference proteome</keyword>
<keyword id="KW-0732">Signal</keyword>
<keyword id="KW-0812">Transmembrane</keyword>
<keyword id="KW-1133">Transmembrane helix</keyword>
<feature type="signal peptide" evidence="3">
    <location>
        <begin position="1"/>
        <end position="20"/>
    </location>
</feature>
<feature type="chain" id="PRO_0000381837" description="Glycosylated lysosomal membrane protein" evidence="4">
    <location>
        <begin position="21"/>
        <end position="406"/>
    </location>
</feature>
<feature type="topological domain" description="Lumenal" evidence="3">
    <location>
        <begin position="21"/>
        <end position="367"/>
    </location>
</feature>
<feature type="transmembrane region" description="Helical" evidence="3">
    <location>
        <begin position="368"/>
        <end position="388"/>
    </location>
</feature>
<feature type="topological domain" description="Cytoplasmic" evidence="3">
    <location>
        <begin position="389"/>
        <end position="406"/>
    </location>
</feature>
<feature type="short sequence motif" description="Lysosomal targeting motif" evidence="2">
    <location>
        <begin position="402"/>
        <end position="406"/>
    </location>
</feature>
<feature type="glycosylation site" description="N-linked (GlcNAc...) asparagine" evidence="3">
    <location>
        <position position="31"/>
    </location>
</feature>
<feature type="glycosylation site" description="N-linked (GlcNAc...) asparagine" evidence="3">
    <location>
        <position position="41"/>
    </location>
</feature>
<feature type="glycosylation site" description="N-linked (GlcNAc...) asparagine" evidence="3">
    <location>
        <position position="62"/>
    </location>
</feature>
<feature type="glycosylation site" description="N-linked (GlcNAc...) asparagine" evidence="3">
    <location>
        <position position="83"/>
    </location>
</feature>
<feature type="glycosylation site" description="N-linked (GlcNAc...) asparagine" evidence="3">
    <location>
        <position position="100"/>
    </location>
</feature>
<feature type="glycosylation site" description="N-linked (GlcNAc...) asparagine" evidence="3">
    <location>
        <position position="131"/>
    </location>
</feature>
<feature type="glycosylation site" description="N-linked (GlcNAc...) asparagine" evidence="3">
    <location>
        <position position="152"/>
    </location>
</feature>
<feature type="glycosylation site" description="N-linked (GlcNAc...) asparagine" evidence="3">
    <location>
        <position position="159"/>
    </location>
</feature>
<feature type="glycosylation site" description="N-linked (GlcNAc...) asparagine" evidence="3">
    <location>
        <position position="182"/>
    </location>
</feature>
<feature type="glycosylation site" description="N-linked (GlcNAc...) asparagine" evidence="3">
    <location>
        <position position="209"/>
    </location>
</feature>
<feature type="glycosylation site" description="N-linked (GlcNAc...) asparagine" evidence="3">
    <location>
        <position position="225"/>
    </location>
</feature>
<feature type="glycosylation site" description="N-linked (GlcNAc...) asparagine" evidence="3">
    <location>
        <position position="271"/>
    </location>
</feature>
<feature type="glycosylation site" description="N-linked (GlcNAc...) asparagine" evidence="3">
    <location>
        <position position="331"/>
    </location>
</feature>
<feature type="glycosylation site" description="N-linked (GlcNAc...) asparagine" evidence="3">
    <location>
        <position position="343"/>
    </location>
</feature>
<evidence type="ECO:0000250" key="1">
    <source>
        <dbReference type="UniProtKB" id="Q8WWB7"/>
    </source>
</evidence>
<evidence type="ECO:0000250" key="2">
    <source>
        <dbReference type="UniProtKB" id="Q9JHJ3"/>
    </source>
</evidence>
<evidence type="ECO:0000255" key="3"/>
<evidence type="ECO:0000305" key="4"/>
<comment type="function">
    <text evidence="2">Required to protect lysosomal transporter MFSD1 from lysosomal proteolysis and for MFSD1 lysosomal localization.</text>
</comment>
<comment type="subunit">
    <text evidence="2">Interacts (via lumenal domain) with lysosomal protein MFSD1; the interaction starts while both proteins are still in the endoplasmic reticulum and is required for stabilization of MFSD1 in lysosomes but has no direct effect on its targeting to lysosomes or transporter activity.</text>
</comment>
<comment type="subcellular location">
    <subcellularLocation>
        <location evidence="2">Lysosome membrane</location>
        <topology evidence="3">Single-pass type I membrane protein</topology>
        <orientation evidence="4">Lumenal side</orientation>
    </subcellularLocation>
</comment>
<comment type="similarity">
    <text evidence="4">Belongs to the GLMP family.</text>
</comment>
<dbReference type="EMBL" id="BT059618">
    <property type="protein sequence ID" value="ACN11331.1"/>
    <property type="molecule type" value="mRNA"/>
</dbReference>
<dbReference type="RefSeq" id="NP_001167308.1">
    <property type="nucleotide sequence ID" value="NM_001173837.1"/>
</dbReference>
<dbReference type="SMR" id="C0HBB2"/>
<dbReference type="STRING" id="8030.ENSSSAP00000034497"/>
<dbReference type="GlyCosmos" id="C0HBB2">
    <property type="glycosylation" value="14 sites, No reported glycans"/>
</dbReference>
<dbReference type="PaxDb" id="8030-ENSSSAP00000034497"/>
<dbReference type="Ensembl" id="ENSSSAT00070061895">
    <property type="protein sequence ID" value="ENSSSAP00070059326"/>
    <property type="gene ID" value="ENSSSAG00070038539"/>
</dbReference>
<dbReference type="GeneID" id="100380552"/>
<dbReference type="KEGG" id="sasa:100380552"/>
<dbReference type="CTD" id="112770"/>
<dbReference type="OrthoDB" id="520698at7898"/>
<dbReference type="Proteomes" id="UP000087266">
    <property type="component" value="Chromosome ssa14"/>
</dbReference>
<dbReference type="GO" id="GO:0005765">
    <property type="term" value="C:lysosomal membrane"/>
    <property type="evidence" value="ECO:0007669"/>
    <property type="project" value="UniProtKB-SubCell"/>
</dbReference>
<dbReference type="GO" id="GO:0005764">
    <property type="term" value="C:lysosome"/>
    <property type="evidence" value="ECO:0000250"/>
    <property type="project" value="UniProtKB"/>
</dbReference>
<dbReference type="GO" id="GO:0016020">
    <property type="term" value="C:membrane"/>
    <property type="evidence" value="ECO:0000250"/>
    <property type="project" value="UniProtKB"/>
</dbReference>
<dbReference type="GO" id="GO:0061462">
    <property type="term" value="P:protein localization to lysosome"/>
    <property type="evidence" value="ECO:0000250"/>
    <property type="project" value="UniProtKB"/>
</dbReference>
<dbReference type="GO" id="GO:0050821">
    <property type="term" value="P:protein stabilization"/>
    <property type="evidence" value="ECO:0000250"/>
    <property type="project" value="UniProtKB"/>
</dbReference>
<dbReference type="InterPro" id="IPR029382">
    <property type="entry name" value="NCU-G1"/>
</dbReference>
<dbReference type="PANTHER" id="PTHR31981">
    <property type="entry name" value="GLYCOSYLATED LYSOSOMAL MEMBRANE PROTEIN"/>
    <property type="match status" value="1"/>
</dbReference>
<dbReference type="PANTHER" id="PTHR31981:SF1">
    <property type="entry name" value="GLYCOSYLATED LYSOSOMAL MEMBRANE PROTEIN"/>
    <property type="match status" value="1"/>
</dbReference>
<dbReference type="Pfam" id="PF15065">
    <property type="entry name" value="NCU-G1"/>
    <property type="match status" value="1"/>
</dbReference>
<organism>
    <name type="scientific">Salmo salar</name>
    <name type="common">Atlantic salmon</name>
    <dbReference type="NCBI Taxonomy" id="8030"/>
    <lineage>
        <taxon>Eukaryota</taxon>
        <taxon>Metazoa</taxon>
        <taxon>Chordata</taxon>
        <taxon>Craniata</taxon>
        <taxon>Vertebrata</taxon>
        <taxon>Euteleostomi</taxon>
        <taxon>Actinopterygii</taxon>
        <taxon>Neopterygii</taxon>
        <taxon>Teleostei</taxon>
        <taxon>Protacanthopterygii</taxon>
        <taxon>Salmoniformes</taxon>
        <taxon>Salmonidae</taxon>
        <taxon>Salmoninae</taxon>
        <taxon>Salmo</taxon>
    </lineage>
</organism>
<sequence>MYTIHFYVLFVLLTVRCSSSFIGNGENYRRNLSLELNPGLNSSLMPLPPGVGLLHVRALGKNNTLHYLLCSQGAPALLLVHTNSTSSKVKVDWPAFLVQNTTGSLKLTPESSVLYSNTLVFTRLWEYDDVNDTAVPEHLPPSSFFQPYELQNFTWDDLNKTLDPMAYTALLCGRDASESFSNGSLCLKFSAFDVEGRDQGWPSLLHNANSSQLRVVLDGVVPRSNRSRFSLELQVVGGTQSMSRVDVLRSIDDEYTPSIFKVSQWVSSPVNSTSPVLGYAQWKPVAYRRPSPVFEDATPCRHSTPVPIAQLPPSGLVLAYYGGESQTTGLNMTFSITGDPFYNTTNYLSWTVLVGLGSPPVDSFSPLVLVIMAVGLGTPMLIILLGGVCVCVRKNRPQPQVYEPIN</sequence>
<reference key="1">
    <citation type="journal article" date="2010" name="BMC Genomics">
        <title>Salmo salar and Esox lucius full-length cDNA sequences reveal changes in evolutionary pressures on a post-tetraploidization genome.</title>
        <authorList>
            <person name="Leong J.S."/>
            <person name="Jantzen S.G."/>
            <person name="von Schalburg K.R."/>
            <person name="Cooper G.A."/>
            <person name="Messmer A.M."/>
            <person name="Liao N.Y."/>
            <person name="Munro S."/>
            <person name="Moore R."/>
            <person name="Holt R.A."/>
            <person name="Jones S.J."/>
            <person name="Davidson W.S."/>
            <person name="Koop B.F."/>
        </authorList>
    </citation>
    <scope>NUCLEOTIDE SEQUENCE [LARGE SCALE MRNA]</scope>
    <source>
        <tissue>Brain</tissue>
    </source>
</reference>
<accession>C0HBB2</accession>